<evidence type="ECO:0000255" key="1">
    <source>
        <dbReference type="HAMAP-Rule" id="MF_00017"/>
    </source>
</evidence>
<comment type="function">
    <text evidence="1">May play a role in DNA repair. It seems to be involved in an RecBC-independent recombinational process of DNA repair. It may act with RecF and RecO.</text>
</comment>
<comment type="similarity">
    <text evidence="1">Belongs to the RecR family.</text>
</comment>
<gene>
    <name evidence="1" type="primary">recR</name>
    <name type="ordered locus">C8J_1207</name>
</gene>
<name>RECR_CAMJ8</name>
<accession>A8FMW9</accession>
<protein>
    <recommendedName>
        <fullName evidence="1">Recombination protein RecR</fullName>
    </recommendedName>
</protein>
<reference key="1">
    <citation type="journal article" date="2007" name="J. Bacteriol.">
        <title>The complete genome sequence of Campylobacter jejuni strain 81116 (NCTC11828).</title>
        <authorList>
            <person name="Pearson B.M."/>
            <person name="Gaskin D.J.H."/>
            <person name="Segers R.P.A.M."/>
            <person name="Wells J.M."/>
            <person name="Nuijten P.J.M."/>
            <person name="van Vliet A.H.M."/>
        </authorList>
    </citation>
    <scope>NUCLEOTIDE SEQUENCE [LARGE SCALE GENOMIC DNA]</scope>
    <source>
        <strain>81116 / NCTC 11828</strain>
    </source>
</reference>
<keyword id="KW-0227">DNA damage</keyword>
<keyword id="KW-0233">DNA recombination</keyword>
<keyword id="KW-0234">DNA repair</keyword>
<keyword id="KW-0479">Metal-binding</keyword>
<keyword id="KW-0862">Zinc</keyword>
<keyword id="KW-0863">Zinc-finger</keyword>
<feature type="chain" id="PRO_0000322876" description="Recombination protein RecR">
    <location>
        <begin position="1"/>
        <end position="190"/>
    </location>
</feature>
<feature type="domain" description="Toprim" evidence="1">
    <location>
        <begin position="81"/>
        <end position="167"/>
    </location>
</feature>
<feature type="zinc finger region" description="C4-type" evidence="1">
    <location>
        <begin position="58"/>
        <end position="73"/>
    </location>
</feature>
<proteinExistence type="inferred from homology"/>
<dbReference type="EMBL" id="CP000814">
    <property type="protein sequence ID" value="ABV52806.1"/>
    <property type="molecule type" value="Genomic_DNA"/>
</dbReference>
<dbReference type="RefSeq" id="WP_002855930.1">
    <property type="nucleotide sequence ID" value="NC_009839.1"/>
</dbReference>
<dbReference type="SMR" id="A8FMW9"/>
<dbReference type="KEGG" id="cju:C8J_1207"/>
<dbReference type="HOGENOM" id="CLU_060739_1_1_7"/>
<dbReference type="GO" id="GO:0003677">
    <property type="term" value="F:DNA binding"/>
    <property type="evidence" value="ECO:0007669"/>
    <property type="project" value="UniProtKB-UniRule"/>
</dbReference>
<dbReference type="GO" id="GO:0008270">
    <property type="term" value="F:zinc ion binding"/>
    <property type="evidence" value="ECO:0007669"/>
    <property type="project" value="UniProtKB-KW"/>
</dbReference>
<dbReference type="GO" id="GO:0006310">
    <property type="term" value="P:DNA recombination"/>
    <property type="evidence" value="ECO:0007669"/>
    <property type="project" value="UniProtKB-UniRule"/>
</dbReference>
<dbReference type="GO" id="GO:0006281">
    <property type="term" value="P:DNA repair"/>
    <property type="evidence" value="ECO:0007669"/>
    <property type="project" value="UniProtKB-UniRule"/>
</dbReference>
<dbReference type="CDD" id="cd01025">
    <property type="entry name" value="TOPRIM_recR"/>
    <property type="match status" value="1"/>
</dbReference>
<dbReference type="Gene3D" id="3.40.1360.10">
    <property type="match status" value="1"/>
</dbReference>
<dbReference type="Gene3D" id="1.10.8.420">
    <property type="entry name" value="RecR Domain 1"/>
    <property type="match status" value="1"/>
</dbReference>
<dbReference type="HAMAP" id="MF_00017">
    <property type="entry name" value="RecR"/>
    <property type="match status" value="1"/>
</dbReference>
<dbReference type="InterPro" id="IPR000093">
    <property type="entry name" value="DNA_Rcmb_RecR"/>
</dbReference>
<dbReference type="InterPro" id="IPR023627">
    <property type="entry name" value="Rcmb_RecR"/>
</dbReference>
<dbReference type="InterPro" id="IPR015967">
    <property type="entry name" value="Rcmb_RecR_Znf"/>
</dbReference>
<dbReference type="InterPro" id="IPR006171">
    <property type="entry name" value="TOPRIM_dom"/>
</dbReference>
<dbReference type="InterPro" id="IPR034137">
    <property type="entry name" value="TOPRIM_RecR"/>
</dbReference>
<dbReference type="NCBIfam" id="TIGR00615">
    <property type="entry name" value="recR"/>
    <property type="match status" value="1"/>
</dbReference>
<dbReference type="PANTHER" id="PTHR30446">
    <property type="entry name" value="RECOMBINATION PROTEIN RECR"/>
    <property type="match status" value="1"/>
</dbReference>
<dbReference type="PANTHER" id="PTHR30446:SF0">
    <property type="entry name" value="RECOMBINATION PROTEIN RECR"/>
    <property type="match status" value="1"/>
</dbReference>
<dbReference type="Pfam" id="PF21176">
    <property type="entry name" value="RecR_HhH"/>
    <property type="match status" value="1"/>
</dbReference>
<dbReference type="Pfam" id="PF02132">
    <property type="entry name" value="RecR_ZnF"/>
    <property type="match status" value="1"/>
</dbReference>
<dbReference type="Pfam" id="PF13662">
    <property type="entry name" value="Toprim_4"/>
    <property type="match status" value="1"/>
</dbReference>
<dbReference type="SUPFAM" id="SSF111304">
    <property type="entry name" value="Recombination protein RecR"/>
    <property type="match status" value="1"/>
</dbReference>
<dbReference type="PROSITE" id="PS01300">
    <property type="entry name" value="RECR"/>
    <property type="match status" value="1"/>
</dbReference>
<dbReference type="PROSITE" id="PS50880">
    <property type="entry name" value="TOPRIM"/>
    <property type="match status" value="1"/>
</dbReference>
<sequence length="190" mass="21411">MAKGLEKFNELVESFANLPTIGKKTAIRLAYHLCINNQIDGMKLAHNIENAIRFIKPCGQCGALSENELCEICSDEERNKNILCIVESPKDILTLEESQSYNGLYFVLDELNEEKLEKLKQIILKLNISELIFALTHSINSDATIFFIEDKFKGLNLTFSKIAQGIPSGVNLENVDLISLNKAMNFRTKI</sequence>
<organism>
    <name type="scientific">Campylobacter jejuni subsp. jejuni serotype O:6 (strain 81116 / NCTC 11828)</name>
    <dbReference type="NCBI Taxonomy" id="407148"/>
    <lineage>
        <taxon>Bacteria</taxon>
        <taxon>Pseudomonadati</taxon>
        <taxon>Campylobacterota</taxon>
        <taxon>Epsilonproteobacteria</taxon>
        <taxon>Campylobacterales</taxon>
        <taxon>Campylobacteraceae</taxon>
        <taxon>Campylobacter</taxon>
    </lineage>
</organism>